<geneLocation type="mitochondrion"/>
<accession>Q9GBZ6</accession>
<name>CYB_OCHTH</name>
<reference key="1">
    <citation type="journal article" date="2000" name="Mol. Phylogenet. Evol.">
        <title>Molecular systematics of pikas (genus Ochotona) inferred from mitochondrial DNA sequences.</title>
        <authorList>
            <person name="Yu N."/>
            <person name="Zheng C."/>
            <person name="Zhang Y.P."/>
            <person name="Li W.H."/>
        </authorList>
    </citation>
    <scope>NUCLEOTIDE SEQUENCE [GENOMIC DNA]</scope>
</reference>
<sequence>MTNIRKSHPLMKIVNHSLIDLPAPSNISAWWNFGSLLGLCLGIQIVTGLFLAMHYTSDTLTAFSSVTHICRDVNYGWIIRYLHANGASMFFICLFLHVGRGIYYGSYTYSETWNIGILLLFAVMATAFMGYVLPWGQMSFWGATVITNLLSAIPYIGTDLVQWIWGGFSVDKATLTRFFAFHFILPFIIAALVMVHLLFLHETGSNNPTGIISDADKIPFHPYYTIKDALGFLLLITLLLTLVLFSPDLLGDPDNYTPANPLSTPPHIKPEWYFLFAYAILRSIPNKLGGVLALVLSIAILAVMPLLHTSKQRSMAFRPISQCLFWILVADLFTLTWIGGQPVEHPFIIIGQLASFLYFFLILILMPTCSLIENKLLKW</sequence>
<proteinExistence type="inferred from homology"/>
<comment type="function">
    <text evidence="2">Component of the ubiquinol-cytochrome c reductase complex (complex III or cytochrome b-c1 complex) that is part of the mitochondrial respiratory chain. The b-c1 complex mediates electron transfer from ubiquinol to cytochrome c. Contributes to the generation of a proton gradient across the mitochondrial membrane that is then used for ATP synthesis.</text>
</comment>
<comment type="cofactor">
    <cofactor evidence="2">
        <name>heme b</name>
        <dbReference type="ChEBI" id="CHEBI:60344"/>
    </cofactor>
    <text evidence="2">Binds 2 heme b groups non-covalently.</text>
</comment>
<comment type="subunit">
    <text evidence="2">The cytochrome bc1 complex contains 11 subunits: 3 respiratory subunits (MT-CYB, CYC1 and UQCRFS1), 2 core proteins (UQCRC1 and UQCRC2) and 6 low-molecular weight proteins (UQCRH/QCR6, UQCRB/QCR7, UQCRQ/QCR8, UQCR10/QCR9, UQCR11/QCR10 and a cleavage product of UQCRFS1). This cytochrome bc1 complex then forms a dimer.</text>
</comment>
<comment type="subcellular location">
    <subcellularLocation>
        <location evidence="2">Mitochondrion inner membrane</location>
        <topology evidence="2">Multi-pass membrane protein</topology>
    </subcellularLocation>
</comment>
<comment type="miscellaneous">
    <text evidence="1">Heme 1 (or BL or b562) is low-potential and absorbs at about 562 nm, and heme 2 (or BH or b566) is high-potential and absorbs at about 566 nm.</text>
</comment>
<comment type="similarity">
    <text evidence="3 4">Belongs to the cytochrome b family.</text>
</comment>
<comment type="caution">
    <text evidence="2">The full-length protein contains only eight transmembrane helices, not nine as predicted by bioinformatics tools.</text>
</comment>
<feature type="chain" id="PRO_0000061309" description="Cytochrome b">
    <location>
        <begin position="1"/>
        <end position="379"/>
    </location>
</feature>
<feature type="transmembrane region" description="Helical" evidence="2">
    <location>
        <begin position="33"/>
        <end position="53"/>
    </location>
</feature>
<feature type="transmembrane region" description="Helical" evidence="2">
    <location>
        <begin position="77"/>
        <end position="98"/>
    </location>
</feature>
<feature type="transmembrane region" description="Helical" evidence="2">
    <location>
        <begin position="113"/>
        <end position="133"/>
    </location>
</feature>
<feature type="transmembrane region" description="Helical" evidence="2">
    <location>
        <begin position="178"/>
        <end position="198"/>
    </location>
</feature>
<feature type="transmembrane region" description="Helical" evidence="2">
    <location>
        <begin position="226"/>
        <end position="246"/>
    </location>
</feature>
<feature type="transmembrane region" description="Helical" evidence="2">
    <location>
        <begin position="288"/>
        <end position="308"/>
    </location>
</feature>
<feature type="transmembrane region" description="Helical" evidence="2">
    <location>
        <begin position="320"/>
        <end position="340"/>
    </location>
</feature>
<feature type="transmembrane region" description="Helical" evidence="2">
    <location>
        <begin position="347"/>
        <end position="367"/>
    </location>
</feature>
<feature type="binding site" description="axial binding residue" evidence="2">
    <location>
        <position position="83"/>
    </location>
    <ligand>
        <name>heme b</name>
        <dbReference type="ChEBI" id="CHEBI:60344"/>
        <label>b562</label>
    </ligand>
    <ligandPart>
        <name>Fe</name>
        <dbReference type="ChEBI" id="CHEBI:18248"/>
    </ligandPart>
</feature>
<feature type="binding site" description="axial binding residue" evidence="2">
    <location>
        <position position="97"/>
    </location>
    <ligand>
        <name>heme b</name>
        <dbReference type="ChEBI" id="CHEBI:60344"/>
        <label>b566</label>
    </ligand>
    <ligandPart>
        <name>Fe</name>
        <dbReference type="ChEBI" id="CHEBI:18248"/>
    </ligandPart>
</feature>
<feature type="binding site" description="axial binding residue" evidence="2">
    <location>
        <position position="182"/>
    </location>
    <ligand>
        <name>heme b</name>
        <dbReference type="ChEBI" id="CHEBI:60344"/>
        <label>b562</label>
    </ligand>
    <ligandPart>
        <name>Fe</name>
        <dbReference type="ChEBI" id="CHEBI:18248"/>
    </ligandPart>
</feature>
<feature type="binding site" description="axial binding residue" evidence="2">
    <location>
        <position position="196"/>
    </location>
    <ligand>
        <name>heme b</name>
        <dbReference type="ChEBI" id="CHEBI:60344"/>
        <label>b566</label>
    </ligand>
    <ligandPart>
        <name>Fe</name>
        <dbReference type="ChEBI" id="CHEBI:18248"/>
    </ligandPart>
</feature>
<feature type="binding site" evidence="2">
    <location>
        <position position="201"/>
    </location>
    <ligand>
        <name>a ubiquinone</name>
        <dbReference type="ChEBI" id="CHEBI:16389"/>
    </ligand>
</feature>
<dbReference type="EMBL" id="AF272987">
    <property type="protein sequence ID" value="AAG00182.1"/>
    <property type="molecule type" value="Genomic_DNA"/>
</dbReference>
<dbReference type="SMR" id="Q9GBZ6"/>
<dbReference type="GO" id="GO:0005743">
    <property type="term" value="C:mitochondrial inner membrane"/>
    <property type="evidence" value="ECO:0007669"/>
    <property type="project" value="UniProtKB-SubCell"/>
</dbReference>
<dbReference type="GO" id="GO:0045275">
    <property type="term" value="C:respiratory chain complex III"/>
    <property type="evidence" value="ECO:0007669"/>
    <property type="project" value="InterPro"/>
</dbReference>
<dbReference type="GO" id="GO:0046872">
    <property type="term" value="F:metal ion binding"/>
    <property type="evidence" value="ECO:0007669"/>
    <property type="project" value="UniProtKB-KW"/>
</dbReference>
<dbReference type="GO" id="GO:0008121">
    <property type="term" value="F:ubiquinol-cytochrome-c reductase activity"/>
    <property type="evidence" value="ECO:0007669"/>
    <property type="project" value="InterPro"/>
</dbReference>
<dbReference type="GO" id="GO:0006122">
    <property type="term" value="P:mitochondrial electron transport, ubiquinol to cytochrome c"/>
    <property type="evidence" value="ECO:0007669"/>
    <property type="project" value="TreeGrafter"/>
</dbReference>
<dbReference type="CDD" id="cd00290">
    <property type="entry name" value="cytochrome_b_C"/>
    <property type="match status" value="1"/>
</dbReference>
<dbReference type="CDD" id="cd00284">
    <property type="entry name" value="Cytochrome_b_N"/>
    <property type="match status" value="1"/>
</dbReference>
<dbReference type="FunFam" id="1.20.810.10:FF:000002">
    <property type="entry name" value="Cytochrome b"/>
    <property type="match status" value="1"/>
</dbReference>
<dbReference type="Gene3D" id="1.20.810.10">
    <property type="entry name" value="Cytochrome Bc1 Complex, Chain C"/>
    <property type="match status" value="1"/>
</dbReference>
<dbReference type="InterPro" id="IPR005798">
    <property type="entry name" value="Cyt_b/b6_C"/>
</dbReference>
<dbReference type="InterPro" id="IPR036150">
    <property type="entry name" value="Cyt_b/b6_C_sf"/>
</dbReference>
<dbReference type="InterPro" id="IPR005797">
    <property type="entry name" value="Cyt_b/b6_N"/>
</dbReference>
<dbReference type="InterPro" id="IPR027387">
    <property type="entry name" value="Cytb/b6-like_sf"/>
</dbReference>
<dbReference type="InterPro" id="IPR030689">
    <property type="entry name" value="Cytochrome_b"/>
</dbReference>
<dbReference type="InterPro" id="IPR048260">
    <property type="entry name" value="Cytochrome_b_C_euk/bac"/>
</dbReference>
<dbReference type="InterPro" id="IPR048259">
    <property type="entry name" value="Cytochrome_b_N_euk/bac"/>
</dbReference>
<dbReference type="InterPro" id="IPR016174">
    <property type="entry name" value="Di-haem_cyt_TM"/>
</dbReference>
<dbReference type="PANTHER" id="PTHR19271">
    <property type="entry name" value="CYTOCHROME B"/>
    <property type="match status" value="1"/>
</dbReference>
<dbReference type="PANTHER" id="PTHR19271:SF16">
    <property type="entry name" value="CYTOCHROME B"/>
    <property type="match status" value="1"/>
</dbReference>
<dbReference type="Pfam" id="PF00032">
    <property type="entry name" value="Cytochrom_B_C"/>
    <property type="match status" value="1"/>
</dbReference>
<dbReference type="Pfam" id="PF00033">
    <property type="entry name" value="Cytochrome_B"/>
    <property type="match status" value="1"/>
</dbReference>
<dbReference type="PIRSF" id="PIRSF038885">
    <property type="entry name" value="COB"/>
    <property type="match status" value="1"/>
</dbReference>
<dbReference type="SUPFAM" id="SSF81648">
    <property type="entry name" value="a domain/subunit of cytochrome bc1 complex (Ubiquinol-cytochrome c reductase)"/>
    <property type="match status" value="1"/>
</dbReference>
<dbReference type="SUPFAM" id="SSF81342">
    <property type="entry name" value="Transmembrane di-heme cytochromes"/>
    <property type="match status" value="1"/>
</dbReference>
<dbReference type="PROSITE" id="PS51003">
    <property type="entry name" value="CYTB_CTER"/>
    <property type="match status" value="1"/>
</dbReference>
<dbReference type="PROSITE" id="PS51002">
    <property type="entry name" value="CYTB_NTER"/>
    <property type="match status" value="1"/>
</dbReference>
<protein>
    <recommendedName>
        <fullName>Cytochrome b</fullName>
    </recommendedName>
    <alternativeName>
        <fullName>Complex III subunit 3</fullName>
    </alternativeName>
    <alternativeName>
        <fullName>Complex III subunit III</fullName>
    </alternativeName>
    <alternativeName>
        <fullName>Cytochrome b-c1 complex subunit 3</fullName>
    </alternativeName>
    <alternativeName>
        <fullName>Ubiquinol-cytochrome-c reductase complex cytochrome b subunit</fullName>
    </alternativeName>
</protein>
<organism>
    <name type="scientific">Ochotona thomasi</name>
    <name type="common">Thomas's pika</name>
    <dbReference type="NCBI Taxonomy" id="130844"/>
    <lineage>
        <taxon>Eukaryota</taxon>
        <taxon>Metazoa</taxon>
        <taxon>Chordata</taxon>
        <taxon>Craniata</taxon>
        <taxon>Vertebrata</taxon>
        <taxon>Euteleostomi</taxon>
        <taxon>Mammalia</taxon>
        <taxon>Eutheria</taxon>
        <taxon>Euarchontoglires</taxon>
        <taxon>Glires</taxon>
        <taxon>Lagomorpha</taxon>
        <taxon>Ochotonidae</taxon>
        <taxon>Ochotona</taxon>
    </lineage>
</organism>
<keyword id="KW-0249">Electron transport</keyword>
<keyword id="KW-0349">Heme</keyword>
<keyword id="KW-0408">Iron</keyword>
<keyword id="KW-0472">Membrane</keyword>
<keyword id="KW-0479">Metal-binding</keyword>
<keyword id="KW-0496">Mitochondrion</keyword>
<keyword id="KW-0999">Mitochondrion inner membrane</keyword>
<keyword id="KW-0679">Respiratory chain</keyword>
<keyword id="KW-0812">Transmembrane</keyword>
<keyword id="KW-1133">Transmembrane helix</keyword>
<keyword id="KW-0813">Transport</keyword>
<keyword id="KW-0830">Ubiquinone</keyword>
<gene>
    <name type="primary">MT-CYB</name>
    <name type="synonym">COB</name>
    <name type="synonym">CYTB</name>
    <name type="synonym">MTCYB</name>
</gene>
<evidence type="ECO:0000250" key="1"/>
<evidence type="ECO:0000250" key="2">
    <source>
        <dbReference type="UniProtKB" id="P00157"/>
    </source>
</evidence>
<evidence type="ECO:0000255" key="3">
    <source>
        <dbReference type="PROSITE-ProRule" id="PRU00967"/>
    </source>
</evidence>
<evidence type="ECO:0000255" key="4">
    <source>
        <dbReference type="PROSITE-ProRule" id="PRU00968"/>
    </source>
</evidence>